<keyword id="KW-0687">Ribonucleoprotein</keyword>
<keyword id="KW-0689">Ribosomal protein</keyword>
<gene>
    <name evidence="1" type="primary">rpmE2</name>
    <name type="ordered locus">M6_Spy0566</name>
</gene>
<protein>
    <recommendedName>
        <fullName evidence="1">Large ribosomal subunit protein bL31B</fullName>
    </recommendedName>
    <alternativeName>
        <fullName evidence="2">50S ribosomal protein L31 type B</fullName>
    </alternativeName>
</protein>
<sequence>MRKDIHPDYRPVVFLDTTTGYQFLSGSTKASKETVEFEGETYPLIRVEISSDSHPFYTGRQKFTQADGRVDRFNKKYGLKDANAAK</sequence>
<proteinExistence type="inferred from homology"/>
<comment type="subunit">
    <text evidence="1">Part of the 50S ribosomal subunit.</text>
</comment>
<comment type="similarity">
    <text evidence="1">Belongs to the bacterial ribosomal protein bL31 family. Type B subfamily.</text>
</comment>
<reference key="1">
    <citation type="journal article" date="2004" name="J. Infect. Dis.">
        <title>Progress toward characterization of the group A Streptococcus metagenome: complete genome sequence of a macrolide-resistant serotype M6 strain.</title>
        <authorList>
            <person name="Banks D.J."/>
            <person name="Porcella S.F."/>
            <person name="Barbian K.D."/>
            <person name="Beres S.B."/>
            <person name="Philips L.E."/>
            <person name="Voyich J.M."/>
            <person name="DeLeo F.R."/>
            <person name="Martin J.M."/>
            <person name="Somerville G.A."/>
            <person name="Musser J.M."/>
        </authorList>
    </citation>
    <scope>NUCLEOTIDE SEQUENCE [LARGE SCALE GENOMIC DNA]</scope>
    <source>
        <strain>ATCC BAA-946 / MGAS10394</strain>
    </source>
</reference>
<name>RL31B_STRP6</name>
<evidence type="ECO:0000255" key="1">
    <source>
        <dbReference type="HAMAP-Rule" id="MF_00502"/>
    </source>
</evidence>
<evidence type="ECO:0000305" key="2"/>
<organism>
    <name type="scientific">Streptococcus pyogenes serotype M6 (strain ATCC BAA-946 / MGAS10394)</name>
    <dbReference type="NCBI Taxonomy" id="286636"/>
    <lineage>
        <taxon>Bacteria</taxon>
        <taxon>Bacillati</taxon>
        <taxon>Bacillota</taxon>
        <taxon>Bacilli</taxon>
        <taxon>Lactobacillales</taxon>
        <taxon>Streptococcaceae</taxon>
        <taxon>Streptococcus</taxon>
    </lineage>
</organism>
<dbReference type="EMBL" id="CP000003">
    <property type="protein sequence ID" value="AAT86701.1"/>
    <property type="molecule type" value="Genomic_DNA"/>
</dbReference>
<dbReference type="RefSeq" id="WP_002985307.1">
    <property type="nucleotide sequence ID" value="NC_006086.1"/>
</dbReference>
<dbReference type="SMR" id="Q5XD12"/>
<dbReference type="KEGG" id="spa:M6_Spy0566"/>
<dbReference type="HOGENOM" id="CLU_114306_2_1_9"/>
<dbReference type="Proteomes" id="UP000001167">
    <property type="component" value="Chromosome"/>
</dbReference>
<dbReference type="GO" id="GO:1990904">
    <property type="term" value="C:ribonucleoprotein complex"/>
    <property type="evidence" value="ECO:0007669"/>
    <property type="project" value="UniProtKB-KW"/>
</dbReference>
<dbReference type="GO" id="GO:0005840">
    <property type="term" value="C:ribosome"/>
    <property type="evidence" value="ECO:0007669"/>
    <property type="project" value="UniProtKB-KW"/>
</dbReference>
<dbReference type="GO" id="GO:0003735">
    <property type="term" value="F:structural constituent of ribosome"/>
    <property type="evidence" value="ECO:0007669"/>
    <property type="project" value="InterPro"/>
</dbReference>
<dbReference type="GO" id="GO:0006412">
    <property type="term" value="P:translation"/>
    <property type="evidence" value="ECO:0007669"/>
    <property type="project" value="UniProtKB-UniRule"/>
</dbReference>
<dbReference type="Gene3D" id="4.10.830.30">
    <property type="entry name" value="Ribosomal protein L31"/>
    <property type="match status" value="1"/>
</dbReference>
<dbReference type="HAMAP" id="MF_00502">
    <property type="entry name" value="Ribosomal_bL31_2"/>
    <property type="match status" value="1"/>
</dbReference>
<dbReference type="InterPro" id="IPR034704">
    <property type="entry name" value="Ribosomal_bL28/bL31-like_sf"/>
</dbReference>
<dbReference type="InterPro" id="IPR002150">
    <property type="entry name" value="Ribosomal_bL31"/>
</dbReference>
<dbReference type="InterPro" id="IPR027493">
    <property type="entry name" value="Ribosomal_bL31_B"/>
</dbReference>
<dbReference type="InterPro" id="IPR042105">
    <property type="entry name" value="Ribosomal_bL31_sf"/>
</dbReference>
<dbReference type="NCBIfam" id="TIGR00105">
    <property type="entry name" value="L31"/>
    <property type="match status" value="1"/>
</dbReference>
<dbReference type="NCBIfam" id="NF002462">
    <property type="entry name" value="PRK01678.1"/>
    <property type="match status" value="1"/>
</dbReference>
<dbReference type="PANTHER" id="PTHR33280">
    <property type="entry name" value="50S RIBOSOMAL PROTEIN L31, CHLOROPLASTIC"/>
    <property type="match status" value="1"/>
</dbReference>
<dbReference type="PANTHER" id="PTHR33280:SF1">
    <property type="entry name" value="LARGE RIBOSOMAL SUBUNIT PROTEIN BL31C"/>
    <property type="match status" value="1"/>
</dbReference>
<dbReference type="Pfam" id="PF01197">
    <property type="entry name" value="Ribosomal_L31"/>
    <property type="match status" value="1"/>
</dbReference>
<dbReference type="PRINTS" id="PR01249">
    <property type="entry name" value="RIBOSOMALL31"/>
</dbReference>
<dbReference type="SUPFAM" id="SSF143800">
    <property type="entry name" value="L28p-like"/>
    <property type="match status" value="1"/>
</dbReference>
<dbReference type="PROSITE" id="PS01143">
    <property type="entry name" value="RIBOSOMAL_L31"/>
    <property type="match status" value="1"/>
</dbReference>
<feature type="chain" id="PRO_0000173274" description="Large ribosomal subunit protein bL31B">
    <location>
        <begin position="1"/>
        <end position="86"/>
    </location>
</feature>
<accession>Q5XD12</accession>